<name>CH10_HELHP</name>
<organism>
    <name type="scientific">Helicobacter hepaticus (strain ATCC 51449 / 3B1)</name>
    <dbReference type="NCBI Taxonomy" id="235279"/>
    <lineage>
        <taxon>Bacteria</taxon>
        <taxon>Pseudomonadati</taxon>
        <taxon>Campylobacterota</taxon>
        <taxon>Epsilonproteobacteria</taxon>
        <taxon>Campylobacterales</taxon>
        <taxon>Helicobacteraceae</taxon>
        <taxon>Helicobacter</taxon>
    </lineage>
</organism>
<accession>Q7U318</accession>
<proteinExistence type="inferred from homology"/>
<sequence length="90" mass="10114">MKFRPLGERVLVERVEEDTKTSSGIIIPDNAKEKPLMGIVKAVSAKIKDDKILKENDKVVFGKYKGAEIKLDSKEFIVLELDDILGVIEK</sequence>
<evidence type="ECO:0000255" key="1">
    <source>
        <dbReference type="HAMAP-Rule" id="MF_00580"/>
    </source>
</evidence>
<dbReference type="EMBL" id="AE017125">
    <property type="protein sequence ID" value="AAP77797.1"/>
    <property type="molecule type" value="Genomic_DNA"/>
</dbReference>
<dbReference type="SMR" id="Q7U318"/>
<dbReference type="STRING" id="235279.HH_1200"/>
<dbReference type="KEGG" id="hhe:HH_1200"/>
<dbReference type="eggNOG" id="COG0234">
    <property type="taxonomic scope" value="Bacteria"/>
</dbReference>
<dbReference type="HOGENOM" id="CLU_132825_2_0_7"/>
<dbReference type="OrthoDB" id="9806791at2"/>
<dbReference type="Proteomes" id="UP000002495">
    <property type="component" value="Chromosome"/>
</dbReference>
<dbReference type="GO" id="GO:0005737">
    <property type="term" value="C:cytoplasm"/>
    <property type="evidence" value="ECO:0007669"/>
    <property type="project" value="UniProtKB-SubCell"/>
</dbReference>
<dbReference type="GO" id="GO:0005524">
    <property type="term" value="F:ATP binding"/>
    <property type="evidence" value="ECO:0007669"/>
    <property type="project" value="InterPro"/>
</dbReference>
<dbReference type="GO" id="GO:0046872">
    <property type="term" value="F:metal ion binding"/>
    <property type="evidence" value="ECO:0007669"/>
    <property type="project" value="TreeGrafter"/>
</dbReference>
<dbReference type="GO" id="GO:0044183">
    <property type="term" value="F:protein folding chaperone"/>
    <property type="evidence" value="ECO:0007669"/>
    <property type="project" value="InterPro"/>
</dbReference>
<dbReference type="GO" id="GO:0051087">
    <property type="term" value="F:protein-folding chaperone binding"/>
    <property type="evidence" value="ECO:0007669"/>
    <property type="project" value="TreeGrafter"/>
</dbReference>
<dbReference type="GO" id="GO:0051082">
    <property type="term" value="F:unfolded protein binding"/>
    <property type="evidence" value="ECO:0007669"/>
    <property type="project" value="TreeGrafter"/>
</dbReference>
<dbReference type="GO" id="GO:0051085">
    <property type="term" value="P:chaperone cofactor-dependent protein refolding"/>
    <property type="evidence" value="ECO:0007669"/>
    <property type="project" value="TreeGrafter"/>
</dbReference>
<dbReference type="CDD" id="cd00320">
    <property type="entry name" value="cpn10"/>
    <property type="match status" value="1"/>
</dbReference>
<dbReference type="FunFam" id="2.30.33.40:FF:000001">
    <property type="entry name" value="10 kDa chaperonin"/>
    <property type="match status" value="1"/>
</dbReference>
<dbReference type="Gene3D" id="2.30.33.40">
    <property type="entry name" value="GroES chaperonin"/>
    <property type="match status" value="1"/>
</dbReference>
<dbReference type="HAMAP" id="MF_00580">
    <property type="entry name" value="CH10"/>
    <property type="match status" value="1"/>
</dbReference>
<dbReference type="InterPro" id="IPR020818">
    <property type="entry name" value="Chaperonin_GroES"/>
</dbReference>
<dbReference type="InterPro" id="IPR037124">
    <property type="entry name" value="Chaperonin_GroES_sf"/>
</dbReference>
<dbReference type="InterPro" id="IPR018369">
    <property type="entry name" value="Chaprnonin_Cpn10_CS"/>
</dbReference>
<dbReference type="InterPro" id="IPR011032">
    <property type="entry name" value="GroES-like_sf"/>
</dbReference>
<dbReference type="NCBIfam" id="NF001537">
    <property type="entry name" value="PRK00364.3-3"/>
    <property type="match status" value="1"/>
</dbReference>
<dbReference type="PANTHER" id="PTHR10772">
    <property type="entry name" value="10 KDA HEAT SHOCK PROTEIN"/>
    <property type="match status" value="1"/>
</dbReference>
<dbReference type="PANTHER" id="PTHR10772:SF58">
    <property type="entry name" value="CO-CHAPERONIN GROES"/>
    <property type="match status" value="1"/>
</dbReference>
<dbReference type="Pfam" id="PF00166">
    <property type="entry name" value="Cpn10"/>
    <property type="match status" value="1"/>
</dbReference>
<dbReference type="PRINTS" id="PR00297">
    <property type="entry name" value="CHAPERONIN10"/>
</dbReference>
<dbReference type="SMART" id="SM00883">
    <property type="entry name" value="Cpn10"/>
    <property type="match status" value="1"/>
</dbReference>
<dbReference type="SUPFAM" id="SSF50129">
    <property type="entry name" value="GroES-like"/>
    <property type="match status" value="1"/>
</dbReference>
<dbReference type="PROSITE" id="PS00681">
    <property type="entry name" value="CHAPERONINS_CPN10"/>
    <property type="match status" value="1"/>
</dbReference>
<feature type="chain" id="PRO_0000174763" description="Co-chaperonin GroES">
    <location>
        <begin position="1"/>
        <end position="90"/>
    </location>
</feature>
<keyword id="KW-0143">Chaperone</keyword>
<keyword id="KW-0963">Cytoplasm</keyword>
<keyword id="KW-1185">Reference proteome</keyword>
<gene>
    <name evidence="1" type="primary">groES</name>
    <name evidence="1" type="synonym">groS</name>
    <name type="ordered locus">HH_1200</name>
</gene>
<reference key="1">
    <citation type="journal article" date="2003" name="Proc. Natl. Acad. Sci. U.S.A.">
        <title>The complete genome sequence of the carcinogenic bacterium Helicobacter hepaticus.</title>
        <authorList>
            <person name="Suerbaum S."/>
            <person name="Josenhans C."/>
            <person name="Sterzenbach T."/>
            <person name="Drescher B."/>
            <person name="Brandt P."/>
            <person name="Bell M."/>
            <person name="Droege M."/>
            <person name="Fartmann B."/>
            <person name="Fischer H.-P."/>
            <person name="Ge Z."/>
            <person name="Hoerster A."/>
            <person name="Holland R."/>
            <person name="Klein K."/>
            <person name="Koenig J."/>
            <person name="Macko L."/>
            <person name="Mendz G.L."/>
            <person name="Nyakatura G."/>
            <person name="Schauer D.B."/>
            <person name="Shen Z."/>
            <person name="Weber J."/>
            <person name="Frosch M."/>
            <person name="Fox J.G."/>
        </authorList>
    </citation>
    <scope>NUCLEOTIDE SEQUENCE [LARGE SCALE GENOMIC DNA]</scope>
    <source>
        <strain>ATCC 51449 / 3B1</strain>
    </source>
</reference>
<protein>
    <recommendedName>
        <fullName evidence="1">Co-chaperonin GroES</fullName>
    </recommendedName>
    <alternativeName>
        <fullName evidence="1">10 kDa chaperonin</fullName>
    </alternativeName>
    <alternativeName>
        <fullName evidence="1">Chaperonin-10</fullName>
        <shortName evidence="1">Cpn10</shortName>
    </alternativeName>
</protein>
<comment type="function">
    <text evidence="1">Together with the chaperonin GroEL, plays an essential role in assisting protein folding. The GroEL-GroES system forms a nano-cage that allows encapsulation of the non-native substrate proteins and provides a physical environment optimized to promote and accelerate protein folding. GroES binds to the apical surface of the GroEL ring, thereby capping the opening of the GroEL channel.</text>
</comment>
<comment type="subunit">
    <text evidence="1">Heptamer of 7 subunits arranged in a ring. Interacts with the chaperonin GroEL.</text>
</comment>
<comment type="subcellular location">
    <subcellularLocation>
        <location evidence="1">Cytoplasm</location>
    </subcellularLocation>
</comment>
<comment type="similarity">
    <text evidence="1">Belongs to the GroES chaperonin family.</text>
</comment>